<protein>
    <recommendedName>
        <fullName evidence="1 4">Arylsulfate sulfotransferase AssT</fullName>
        <ecNumber evidence="1 3">2.8.2.22</ecNumber>
    </recommendedName>
    <alternativeName>
        <fullName evidence="1">Aryl sulfotransferase AssT</fullName>
    </alternativeName>
</protein>
<keyword id="KW-0002">3D-structure</keyword>
<keyword id="KW-0903">Direct protein sequencing</keyword>
<keyword id="KW-1015">Disulfide bond</keyword>
<keyword id="KW-0574">Periplasm</keyword>
<keyword id="KW-1185">Reference proteome</keyword>
<keyword id="KW-0732">Signal</keyword>
<keyword id="KW-0808">Transferase</keyword>
<accession>Q8FDI4</accession>
<gene>
    <name evidence="1" type="primary">assT</name>
    <name type="ordered locus">c3785</name>
</gene>
<dbReference type="EC" id="2.8.2.22" evidence="1 3"/>
<dbReference type="EMBL" id="AE014075">
    <property type="protein sequence ID" value="AAN82229.1"/>
    <property type="molecule type" value="Genomic_DNA"/>
</dbReference>
<dbReference type="RefSeq" id="WP_000459868.1">
    <property type="nucleotide sequence ID" value="NC_004431.1"/>
</dbReference>
<dbReference type="PDB" id="3ELQ">
    <property type="method" value="X-ray"/>
    <property type="resolution" value="2.00 A"/>
    <property type="chains" value="A/B=28-598"/>
</dbReference>
<dbReference type="PDB" id="3ETS">
    <property type="method" value="X-ray"/>
    <property type="resolution" value="2.40 A"/>
    <property type="chains" value="A/B=28-598"/>
</dbReference>
<dbReference type="PDB" id="3ETT">
    <property type="method" value="X-ray"/>
    <property type="resolution" value="2.10 A"/>
    <property type="chains" value="A/B=28-598"/>
</dbReference>
<dbReference type="PDBsum" id="3ELQ"/>
<dbReference type="PDBsum" id="3ETS"/>
<dbReference type="PDBsum" id="3ETT"/>
<dbReference type="SMR" id="Q8FDI4"/>
<dbReference type="STRING" id="199310.c3785"/>
<dbReference type="KEGG" id="ecc:c3785"/>
<dbReference type="eggNOG" id="ENOG502ZAQ1">
    <property type="taxonomic scope" value="Bacteria"/>
</dbReference>
<dbReference type="HOGENOM" id="CLU_026635_2_0_6"/>
<dbReference type="BioCyc" id="ECOL199310:C3785-MONOMER"/>
<dbReference type="BRENDA" id="2.8.2.22">
    <property type="organism ID" value="2026"/>
</dbReference>
<dbReference type="SABIO-RK" id="Q8FDI4"/>
<dbReference type="EvolutionaryTrace" id="Q8FDI4"/>
<dbReference type="Proteomes" id="UP000001410">
    <property type="component" value="Chromosome"/>
</dbReference>
<dbReference type="GO" id="GO:0042597">
    <property type="term" value="C:periplasmic space"/>
    <property type="evidence" value="ECO:0007669"/>
    <property type="project" value="UniProtKB-SubCell"/>
</dbReference>
<dbReference type="GO" id="GO:0004062">
    <property type="term" value="F:aryl sulfotransferase activity"/>
    <property type="evidence" value="ECO:0007669"/>
    <property type="project" value="InterPro"/>
</dbReference>
<dbReference type="GO" id="GO:0047686">
    <property type="term" value="F:arylsulfate sulfotransferase activity"/>
    <property type="evidence" value="ECO:0007669"/>
    <property type="project" value="UniProtKB-UniRule"/>
</dbReference>
<dbReference type="GO" id="GO:0042802">
    <property type="term" value="F:identical protein binding"/>
    <property type="evidence" value="ECO:0000353"/>
    <property type="project" value="IntAct"/>
</dbReference>
<dbReference type="FunFam" id="2.60.40.3100:FF:000001">
    <property type="entry name" value="Arylsulfate sulfotransferase AssT"/>
    <property type="match status" value="1"/>
</dbReference>
<dbReference type="Gene3D" id="2.60.40.3100">
    <property type="entry name" value="Arylsulphate sulphotransferase monomer, N-terminal domain"/>
    <property type="match status" value="1"/>
</dbReference>
<dbReference type="HAMAP" id="MF_00933">
    <property type="entry name" value="Arylsulfotrans_AssT"/>
    <property type="match status" value="1"/>
</dbReference>
<dbReference type="InterPro" id="IPR053143">
    <property type="entry name" value="Arylsulfate_ST"/>
</dbReference>
<dbReference type="InterPro" id="IPR035391">
    <property type="entry name" value="Arylsulfotran_N"/>
</dbReference>
<dbReference type="InterPro" id="IPR010262">
    <property type="entry name" value="Arylsulfotransferase_bact"/>
</dbReference>
<dbReference type="InterPro" id="IPR028610">
    <property type="entry name" value="AssT_Enterobac"/>
</dbReference>
<dbReference type="InterPro" id="IPR038477">
    <property type="entry name" value="ASST_N_sf"/>
</dbReference>
<dbReference type="PANTHER" id="PTHR35340:SF10">
    <property type="entry name" value="CYTOPLASMIC PROTEIN"/>
    <property type="match status" value="1"/>
</dbReference>
<dbReference type="PANTHER" id="PTHR35340">
    <property type="entry name" value="PQQ ENZYME REPEAT PROTEIN-RELATED"/>
    <property type="match status" value="1"/>
</dbReference>
<dbReference type="Pfam" id="PF17425">
    <property type="entry name" value="Arylsulfotran_N"/>
    <property type="match status" value="1"/>
</dbReference>
<dbReference type="Pfam" id="PF05935">
    <property type="entry name" value="Arylsulfotrans"/>
    <property type="match status" value="1"/>
</dbReference>
<evidence type="ECO:0000255" key="1">
    <source>
        <dbReference type="HAMAP-Rule" id="MF_00933"/>
    </source>
</evidence>
<evidence type="ECO:0000269" key="2">
    <source>
    </source>
</evidence>
<evidence type="ECO:0000269" key="3">
    <source>
    </source>
</evidence>
<evidence type="ECO:0000303" key="4">
    <source>
    </source>
</evidence>
<evidence type="ECO:0000305" key="5">
    <source>
    </source>
</evidence>
<evidence type="ECO:0000305" key="6">
    <source>
    </source>
</evidence>
<evidence type="ECO:0007744" key="7">
    <source>
        <dbReference type="PDB" id="3ETS"/>
    </source>
</evidence>
<evidence type="ECO:0007829" key="8">
    <source>
        <dbReference type="PDB" id="3ELQ"/>
    </source>
</evidence>
<evidence type="ECO:0007829" key="9">
    <source>
        <dbReference type="PDB" id="3ETS"/>
    </source>
</evidence>
<name>ASST_ECOL6</name>
<reference key="1">
    <citation type="journal article" date="2002" name="Proc. Natl. Acad. Sci. U.S.A.">
        <title>Extensive mosaic structure revealed by the complete genome sequence of uropathogenic Escherichia coli.</title>
        <authorList>
            <person name="Welch R.A."/>
            <person name="Burland V."/>
            <person name="Plunkett G. III"/>
            <person name="Redford P."/>
            <person name="Roesch P."/>
            <person name="Rasko D."/>
            <person name="Buckles E.L."/>
            <person name="Liou S.-R."/>
            <person name="Boutin A."/>
            <person name="Hackett J."/>
            <person name="Stroud D."/>
            <person name="Mayhew G.F."/>
            <person name="Rose D.J."/>
            <person name="Zhou S."/>
            <person name="Schwartz D.C."/>
            <person name="Perna N.T."/>
            <person name="Mobley H.L.T."/>
            <person name="Donnenberg M.S."/>
            <person name="Blattner F.R."/>
        </authorList>
    </citation>
    <scope>NUCLEOTIDE SEQUENCE [LARGE SCALE GENOMIC DNA]</scope>
    <source>
        <strain>CFT073 / ATCC 700928 / UPEC</strain>
    </source>
</reference>
<reference key="2">
    <citation type="journal article" date="2008" name="J. Mol. Biol.">
        <title>DsbL and DsbI form a specific dithiol oxidase system for periplasmic arylsulfate sulfotransferase in uropathogenic Escherichia coli.</title>
        <authorList>
            <person name="Grimshaw J.P."/>
            <person name="Stirnimann C.U."/>
            <person name="Brozzo M.S."/>
            <person name="Malojcic G."/>
            <person name="Grutter M.G."/>
            <person name="Capitani G."/>
            <person name="Glockshuber R."/>
        </authorList>
    </citation>
    <scope>PARTIAL PROTEIN SEQUENCE</scope>
    <scope>SUBUNIT</scope>
    <scope>SUBCELLULAR LOCATION</scope>
    <scope>IDENTIFICATION BY MASS SPECTROMETRY</scope>
    <scope>FUNCTION</scope>
    <scope>CATALYTIC ACTIVITY</scope>
    <scope>INDUCTION</scope>
    <source>
        <strain>CFT073 / ATCC 700928 / UPEC</strain>
    </source>
</reference>
<reference key="3">
    <citation type="journal article" date="2008" name="Proc. Natl. Acad. Sci. U.S.A.">
        <title>A structural and biochemical basis for PAPS-independent sulfuryl transfer by aryl sulfotransferase from uropathogenic Escherichia coli.</title>
        <authorList>
            <person name="Malojcic G."/>
            <person name="Owen R.L."/>
            <person name="Grimshaw J.P."/>
            <person name="Brozzo M.S."/>
            <person name="Dreher-Teo H."/>
            <person name="Glockshuber R."/>
        </authorList>
    </citation>
    <scope>X-RAY CRYSTALLOGRAPHY (2.0 ANGSTROMS) OF 28-598 IN COMPLEXES WITH P-NITROPHENOL AND 4-METHYLUMBELLIFERONE</scope>
    <scope>PARTIAL PROTEIN SEQUENCE OF N-TERMINUS</scope>
    <scope>FUNCTION</scope>
    <scope>CATALYTIC ACTIVITY</scope>
    <scope>SUBUNIT</scope>
    <scope>DISULFIDE BOND</scope>
    <scope>BIOPHYSICOCHEMICAL PROPERTIES</scope>
    <scope>IDENTIFICATION BY MASS SPECTROMETRY</scope>
    <scope>MUTAGENESIS OF TYR-123; TYR-235; HIS-279; HIS-383; ARG-401 AND TYR-586</scope>
    <scope>ACTIVE SITE</scope>
    <scope>REACTION MECHANISM</scope>
    <source>
        <strain>CFT073 / ATCC 700928 / UPEC</strain>
    </source>
</reference>
<organism>
    <name type="scientific">Escherichia coli O6:H1 (strain CFT073 / ATCC 700928 / UPEC)</name>
    <dbReference type="NCBI Taxonomy" id="199310"/>
    <lineage>
        <taxon>Bacteria</taxon>
        <taxon>Pseudomonadati</taxon>
        <taxon>Pseudomonadota</taxon>
        <taxon>Gammaproteobacteria</taxon>
        <taxon>Enterobacterales</taxon>
        <taxon>Enterobacteriaceae</taxon>
        <taxon>Escherichia</taxon>
    </lineage>
</organism>
<comment type="function">
    <text evidence="2 3">Catalyzes the transfer of a sulfate group from a phenyl sulfate ester to other phenolic compounds. In vitro, is able to use 4-methylumbelliferyl sulfate and p-nitrophenyl sulfate (PNS) as donor substrates with phenol as the acceptor substrate (PubMed:18565543, PubMed:19036922). Cannot use 3'-phosphoadenosine-5'-phophosulfate (PAPS), the donor substrate of mammalian sulfotransferase (PubMed:19036922).</text>
</comment>
<comment type="catalytic activity">
    <reaction evidence="2 3">
        <text>an aryl sulfate + a phenol = an aryl sulfate + a phenol</text>
        <dbReference type="Rhea" id="RHEA:51072"/>
        <dbReference type="ChEBI" id="CHEBI:33853"/>
        <dbReference type="ChEBI" id="CHEBI:140317"/>
        <dbReference type="EC" id="2.8.2.22"/>
    </reaction>
</comment>
<comment type="catalytic activity">
    <reaction evidence="3">
        <text>4-methylumbelliferone sulfate + phenol = phenyl sulfate + 4-methylumbelliferone</text>
        <dbReference type="Rhea" id="RHEA:79263"/>
        <dbReference type="ChEBI" id="CHEBI:15882"/>
        <dbReference type="ChEBI" id="CHEBI:17224"/>
        <dbReference type="ChEBI" id="CHEBI:85289"/>
        <dbReference type="ChEBI" id="CHEBI:144581"/>
    </reaction>
</comment>
<comment type="biophysicochemical properties">
    <kinetics>
        <KM evidence="3">1.35 mM for phenol (at pH 8.0)</KM>
        <KM evidence="3">45 uM for 4-methylumbelliferylsulfate (at pH 8.0)</KM>
        <text evidence="3">kcat is 48.6 sec(-1) with phenol and 4-methylumbelliferylsulfate as substrates (at pH 8.0).</text>
    </kinetics>
</comment>
<comment type="subunit">
    <text evidence="2 3">Homodimer.</text>
</comment>
<comment type="interaction">
    <interactant intactId="EBI-15743267">
        <id>Q8FDI4</id>
    </interactant>
    <interactant intactId="EBI-15743267">
        <id>Q8FDI4</id>
        <label>assT</label>
    </interactant>
    <organismsDiffer>false</organismsDiffer>
    <experiments>2</experiments>
</comment>
<comment type="subcellular location">
    <subcellularLocation>
        <location evidence="5">Periplasm</location>
    </subcellularLocation>
</comment>
<comment type="induction">
    <text evidence="2">Expressed from a tri-cistronic operon that encodes AssT, DsbI and DsbL.</text>
</comment>
<comment type="PTM">
    <text evidence="2">The disulfide bond is crucial for enzyme activity.</text>
</comment>
<comment type="miscellaneous">
    <text evidence="6">Most commensal E.coli strains do not have a gene for arylsulfate sulfotransferase, in contrast to strain CFT073 and other uropathogenic strains.</text>
</comment>
<comment type="similarity">
    <text evidence="1">Belongs to the aryl sulfotransferase family.</text>
</comment>
<proteinExistence type="evidence at protein level"/>
<feature type="signal peptide">
    <location>
        <begin position="1"/>
        <end position="27"/>
    </location>
</feature>
<feature type="chain" id="PRO_0000418844" description="Arylsulfate sulfotransferase AssT">
    <location>
        <begin position="28"/>
        <end position="598"/>
    </location>
</feature>
<feature type="active site" description="Nucleophile; sulfurylated histidine covalent intermediate" evidence="1 3">
    <location>
        <position position="463"/>
    </location>
</feature>
<feature type="binding site" evidence="3 7">
    <location>
        <position position="279"/>
    </location>
    <ligand>
        <name>4-methylumbelliferone</name>
        <dbReference type="ChEBI" id="CHEBI:17224"/>
    </ligand>
</feature>
<feature type="binding site" evidence="3 7">
    <location>
        <position position="383"/>
    </location>
    <ligand>
        <name>4-methylumbelliferone</name>
        <dbReference type="ChEBI" id="CHEBI:17224"/>
    </ligand>
</feature>
<feature type="binding site" evidence="3 7">
    <location>
        <position position="463"/>
    </location>
    <ligand>
        <name>4-methylumbelliferone</name>
        <dbReference type="ChEBI" id="CHEBI:17224"/>
    </ligand>
</feature>
<feature type="disulfide bond" evidence="1 3">
    <location>
        <begin position="445"/>
        <end position="451"/>
    </location>
</feature>
<feature type="mutagenesis site" description="No effect." evidence="3">
    <original>Y</original>
    <variation>F</variation>
    <location>
        <position position="123"/>
    </location>
</feature>
<feature type="mutagenesis site" description="No effect." evidence="3">
    <original>Y</original>
    <variation>F</variation>
    <location>
        <position position="235"/>
    </location>
</feature>
<feature type="mutagenesis site" description="Reduces enzyme activity by 96%." evidence="3">
    <original>H</original>
    <variation>L</variation>
    <location>
        <position position="279"/>
    </location>
</feature>
<feature type="mutagenesis site" description="Reduces enzyme activity by over 99%." evidence="3">
    <original>H</original>
    <variation>L</variation>
    <location>
        <position position="383"/>
    </location>
</feature>
<feature type="mutagenesis site" description="Reduces enzyme activity by over 99%." evidence="3">
    <original>R</original>
    <variation>L</variation>
    <location>
        <position position="401"/>
    </location>
</feature>
<feature type="mutagenesis site" description="Reduces enzyme activity by about 40%." evidence="3">
    <original>Y</original>
    <variation>F</variation>
    <location>
        <position position="586"/>
    </location>
</feature>
<feature type="strand" evidence="8">
    <location>
        <begin position="36"/>
        <end position="40"/>
    </location>
</feature>
<feature type="strand" evidence="8">
    <location>
        <begin position="42"/>
        <end position="49"/>
    </location>
</feature>
<feature type="strand" evidence="8">
    <location>
        <begin position="53"/>
        <end position="57"/>
    </location>
</feature>
<feature type="strand" evidence="8">
    <location>
        <begin position="64"/>
        <end position="70"/>
    </location>
</feature>
<feature type="strand" evidence="8">
    <location>
        <begin position="73"/>
        <end position="76"/>
    </location>
</feature>
<feature type="strand" evidence="8">
    <location>
        <begin position="80"/>
        <end position="84"/>
    </location>
</feature>
<feature type="helix" evidence="8">
    <location>
        <begin position="86"/>
        <end position="92"/>
    </location>
</feature>
<feature type="strand" evidence="8">
    <location>
        <begin position="94"/>
        <end position="98"/>
    </location>
</feature>
<feature type="strand" evidence="8">
    <location>
        <begin position="104"/>
        <end position="114"/>
    </location>
</feature>
<feature type="strand" evidence="8">
    <location>
        <begin position="117"/>
        <end position="126"/>
    </location>
</feature>
<feature type="strand" evidence="8">
    <location>
        <begin position="140"/>
        <end position="143"/>
    </location>
</feature>
<feature type="strand" evidence="8">
    <location>
        <begin position="145"/>
        <end position="151"/>
    </location>
</feature>
<feature type="strand" evidence="8">
    <location>
        <begin position="159"/>
        <end position="166"/>
    </location>
</feature>
<feature type="strand" evidence="8">
    <location>
        <begin position="192"/>
        <end position="194"/>
    </location>
</feature>
<feature type="strand" evidence="8">
    <location>
        <begin position="201"/>
        <end position="207"/>
    </location>
</feature>
<feature type="strand" evidence="8">
    <location>
        <begin position="213"/>
        <end position="216"/>
    </location>
</feature>
<feature type="helix" evidence="8">
    <location>
        <begin position="219"/>
        <end position="221"/>
    </location>
</feature>
<feature type="strand" evidence="8">
    <location>
        <begin position="225"/>
        <end position="227"/>
    </location>
</feature>
<feature type="helix" evidence="8">
    <location>
        <begin position="230"/>
        <end position="232"/>
    </location>
</feature>
<feature type="strand" evidence="8">
    <location>
        <begin position="237"/>
        <end position="241"/>
    </location>
</feature>
<feature type="strand" evidence="8">
    <location>
        <begin position="247"/>
        <end position="252"/>
    </location>
</feature>
<feature type="strand" evidence="8">
    <location>
        <begin position="254"/>
        <end position="258"/>
    </location>
</feature>
<feature type="strand" evidence="8">
    <location>
        <begin position="264"/>
        <end position="269"/>
    </location>
</feature>
<feature type="strand" evidence="8">
    <location>
        <begin position="281"/>
        <end position="283"/>
    </location>
</feature>
<feature type="strand" evidence="8">
    <location>
        <begin position="289"/>
        <end position="295"/>
    </location>
</feature>
<feature type="strand" evidence="8">
    <location>
        <begin position="312"/>
        <end position="316"/>
    </location>
</feature>
<feature type="strand" evidence="8">
    <location>
        <begin position="322"/>
        <end position="327"/>
    </location>
</feature>
<feature type="helix" evidence="8">
    <location>
        <begin position="328"/>
        <end position="331"/>
    </location>
</feature>
<feature type="helix" evidence="8">
    <location>
        <begin position="340"/>
        <end position="342"/>
    </location>
</feature>
<feature type="strand" evidence="9">
    <location>
        <begin position="358"/>
        <end position="360"/>
    </location>
</feature>
<feature type="strand" evidence="8">
    <location>
        <begin position="369"/>
        <end position="373"/>
    </location>
</feature>
<feature type="strand" evidence="8">
    <location>
        <begin position="384"/>
        <end position="390"/>
    </location>
</feature>
<feature type="turn" evidence="8">
    <location>
        <begin position="391"/>
        <end position="394"/>
    </location>
</feature>
<feature type="strand" evidence="8">
    <location>
        <begin position="395"/>
        <end position="400"/>
    </location>
</feature>
<feature type="turn" evidence="8">
    <location>
        <begin position="401"/>
        <end position="403"/>
    </location>
</feature>
<feature type="strand" evidence="8">
    <location>
        <begin position="404"/>
        <end position="409"/>
    </location>
</feature>
<feature type="strand" evidence="8">
    <location>
        <begin position="414"/>
        <end position="419"/>
    </location>
</feature>
<feature type="helix" evidence="8">
    <location>
        <begin position="428"/>
        <end position="431"/>
    </location>
</feature>
<feature type="strand" evidence="8">
    <location>
        <begin position="434"/>
        <end position="436"/>
    </location>
</feature>
<feature type="strand" evidence="8">
    <location>
        <begin position="451"/>
        <end position="455"/>
    </location>
</feature>
<feature type="strand" evidence="8">
    <location>
        <begin position="463"/>
        <end position="467"/>
    </location>
</feature>
<feature type="strand" evidence="8">
    <location>
        <begin position="473"/>
        <end position="477"/>
    </location>
</feature>
<feature type="helix" evidence="8">
    <location>
        <begin position="482"/>
        <end position="484"/>
    </location>
</feature>
<feature type="helix" evidence="8">
    <location>
        <begin position="490"/>
        <end position="492"/>
    </location>
</feature>
<feature type="strand" evidence="8">
    <location>
        <begin position="496"/>
        <end position="503"/>
    </location>
</feature>
<feature type="turn" evidence="8">
    <location>
        <begin position="504"/>
        <end position="507"/>
    </location>
</feature>
<feature type="strand" evidence="8">
    <location>
        <begin position="508"/>
        <end position="515"/>
    </location>
</feature>
<feature type="helix" evidence="8">
    <location>
        <begin position="517"/>
        <end position="523"/>
    </location>
</feature>
<feature type="strand" evidence="8">
    <location>
        <begin position="530"/>
        <end position="534"/>
    </location>
</feature>
<feature type="turn" evidence="8">
    <location>
        <begin position="535"/>
        <end position="538"/>
    </location>
</feature>
<feature type="strand" evidence="8">
    <location>
        <begin position="539"/>
        <end position="547"/>
    </location>
</feature>
<feature type="turn" evidence="8">
    <location>
        <begin position="548"/>
        <end position="550"/>
    </location>
</feature>
<feature type="strand" evidence="8">
    <location>
        <begin position="557"/>
        <end position="564"/>
    </location>
</feature>
<feature type="turn" evidence="8">
    <location>
        <begin position="565"/>
        <end position="567"/>
    </location>
</feature>
<feature type="strand" evidence="8">
    <location>
        <begin position="570"/>
        <end position="577"/>
    </location>
</feature>
<feature type="strand" evidence="8">
    <location>
        <begin position="579"/>
        <end position="582"/>
    </location>
</feature>
<feature type="strand" evidence="8">
    <location>
        <begin position="587"/>
        <end position="591"/>
    </location>
</feature>
<feature type="helix" evidence="8">
    <location>
        <begin position="593"/>
        <end position="596"/>
    </location>
</feature>
<sequence length="598" mass="66570">MFDKYRKTLVAGTVAITLGLSASGVMAAGFKPAPPAGQLGAVIVDPYGNAPLTALVDLDSHVISDVKVTVHGKGEKGVEISYPVGQESLKTYDGVPIFGLYQKFANKVTVEWKENGKVMKDDYVVHTSAIVNNYMDNRSISDLQQTKVIKVAPGFEDRLYLVNTHTFTAQGXDLHWHGEKDKNAGILDAGPATGALPFDIAPFTFIVDTEGEYRWWLDQDTFYDGRDRDINKRGYLMGIRETPRGTFTAVQGQHWYEFDMMGQVLEDHKLPRGFADATHESIETPNGTVLLRVGKSNYRRDDGVHVTTIRDHILEVDKSGRVVDVWDLTKILDPKRDALLGALDAGAVCVNVDLAHAGQQAKLEPDTPFGDALGVGPGRNWAHVNSIAYDAKDDSIILSSRHQGVVKIGRDKQVKWILAPSKGWEKPLASKLLKPVDANGKPITCNENGLCENSDFDFTYTQHTAWISSKGTLTIFDNGDGRHLEQPALPTMKYSRFVEYKIDEKKGTVQQVWEYGKERGYDFYSPITSIIEYQADRNTMFGFGGSIHLFDVGQPTVGKLNEIDYKTKEVKVEIDVLSDKPNQTHYRALLVRPQQMFK</sequence>